<accession>Q1IS97</accession>
<feature type="chain" id="PRO_0000306548" description="Small ribosomal subunit protein uS13">
    <location>
        <begin position="1"/>
        <end position="127"/>
    </location>
</feature>
<feature type="region of interest" description="Disordered" evidence="2">
    <location>
        <begin position="93"/>
        <end position="127"/>
    </location>
</feature>
<dbReference type="EMBL" id="CP000360">
    <property type="protein sequence ID" value="ABF40253.1"/>
    <property type="molecule type" value="Genomic_DNA"/>
</dbReference>
<dbReference type="RefSeq" id="WP_011522055.1">
    <property type="nucleotide sequence ID" value="NC_008009.1"/>
</dbReference>
<dbReference type="SMR" id="Q1IS97"/>
<dbReference type="STRING" id="204669.Acid345_1251"/>
<dbReference type="EnsemblBacteria" id="ABF40253">
    <property type="protein sequence ID" value="ABF40253"/>
    <property type="gene ID" value="Acid345_1251"/>
</dbReference>
<dbReference type="KEGG" id="aba:Acid345_1251"/>
<dbReference type="eggNOG" id="COG0099">
    <property type="taxonomic scope" value="Bacteria"/>
</dbReference>
<dbReference type="HOGENOM" id="CLU_103849_1_2_0"/>
<dbReference type="OrthoDB" id="9803610at2"/>
<dbReference type="Proteomes" id="UP000002432">
    <property type="component" value="Chromosome"/>
</dbReference>
<dbReference type="GO" id="GO:0005829">
    <property type="term" value="C:cytosol"/>
    <property type="evidence" value="ECO:0007669"/>
    <property type="project" value="TreeGrafter"/>
</dbReference>
<dbReference type="GO" id="GO:0015935">
    <property type="term" value="C:small ribosomal subunit"/>
    <property type="evidence" value="ECO:0007669"/>
    <property type="project" value="TreeGrafter"/>
</dbReference>
<dbReference type="GO" id="GO:0019843">
    <property type="term" value="F:rRNA binding"/>
    <property type="evidence" value="ECO:0007669"/>
    <property type="project" value="UniProtKB-UniRule"/>
</dbReference>
<dbReference type="GO" id="GO:0003735">
    <property type="term" value="F:structural constituent of ribosome"/>
    <property type="evidence" value="ECO:0007669"/>
    <property type="project" value="InterPro"/>
</dbReference>
<dbReference type="GO" id="GO:0000049">
    <property type="term" value="F:tRNA binding"/>
    <property type="evidence" value="ECO:0007669"/>
    <property type="project" value="UniProtKB-UniRule"/>
</dbReference>
<dbReference type="GO" id="GO:0006412">
    <property type="term" value="P:translation"/>
    <property type="evidence" value="ECO:0007669"/>
    <property type="project" value="UniProtKB-UniRule"/>
</dbReference>
<dbReference type="FunFam" id="1.10.8.50:FF:000001">
    <property type="entry name" value="30S ribosomal protein S13"/>
    <property type="match status" value="1"/>
</dbReference>
<dbReference type="FunFam" id="4.10.910.10:FF:000001">
    <property type="entry name" value="30S ribosomal protein S13"/>
    <property type="match status" value="1"/>
</dbReference>
<dbReference type="Gene3D" id="1.10.8.50">
    <property type="match status" value="1"/>
</dbReference>
<dbReference type="Gene3D" id="4.10.910.10">
    <property type="entry name" value="30s ribosomal protein s13, domain 2"/>
    <property type="match status" value="1"/>
</dbReference>
<dbReference type="HAMAP" id="MF_01315">
    <property type="entry name" value="Ribosomal_uS13"/>
    <property type="match status" value="1"/>
</dbReference>
<dbReference type="InterPro" id="IPR027437">
    <property type="entry name" value="Rbsml_uS13_C"/>
</dbReference>
<dbReference type="InterPro" id="IPR001892">
    <property type="entry name" value="Ribosomal_uS13"/>
</dbReference>
<dbReference type="InterPro" id="IPR010979">
    <property type="entry name" value="Ribosomal_uS13-like_H2TH"/>
</dbReference>
<dbReference type="InterPro" id="IPR019980">
    <property type="entry name" value="Ribosomal_uS13_bac-type"/>
</dbReference>
<dbReference type="InterPro" id="IPR018269">
    <property type="entry name" value="Ribosomal_uS13_CS"/>
</dbReference>
<dbReference type="NCBIfam" id="TIGR03631">
    <property type="entry name" value="uS13_bact"/>
    <property type="match status" value="1"/>
</dbReference>
<dbReference type="PANTHER" id="PTHR10871">
    <property type="entry name" value="30S RIBOSOMAL PROTEIN S13/40S RIBOSOMAL PROTEIN S18"/>
    <property type="match status" value="1"/>
</dbReference>
<dbReference type="PANTHER" id="PTHR10871:SF1">
    <property type="entry name" value="SMALL RIBOSOMAL SUBUNIT PROTEIN US13M"/>
    <property type="match status" value="1"/>
</dbReference>
<dbReference type="Pfam" id="PF00416">
    <property type="entry name" value="Ribosomal_S13"/>
    <property type="match status" value="1"/>
</dbReference>
<dbReference type="PIRSF" id="PIRSF002134">
    <property type="entry name" value="Ribosomal_S13"/>
    <property type="match status" value="1"/>
</dbReference>
<dbReference type="SUPFAM" id="SSF46946">
    <property type="entry name" value="S13-like H2TH domain"/>
    <property type="match status" value="1"/>
</dbReference>
<dbReference type="PROSITE" id="PS00646">
    <property type="entry name" value="RIBOSOMAL_S13_1"/>
    <property type="match status" value="1"/>
</dbReference>
<dbReference type="PROSITE" id="PS50159">
    <property type="entry name" value="RIBOSOMAL_S13_2"/>
    <property type="match status" value="1"/>
</dbReference>
<organism>
    <name type="scientific">Koribacter versatilis (strain Ellin345)</name>
    <dbReference type="NCBI Taxonomy" id="204669"/>
    <lineage>
        <taxon>Bacteria</taxon>
        <taxon>Pseudomonadati</taxon>
        <taxon>Acidobacteriota</taxon>
        <taxon>Terriglobia</taxon>
        <taxon>Terriglobales</taxon>
        <taxon>Candidatus Korobacteraceae</taxon>
        <taxon>Candidatus Korobacter</taxon>
    </lineage>
</organism>
<reference key="1">
    <citation type="journal article" date="2009" name="Appl. Environ. Microbiol.">
        <title>Three genomes from the phylum Acidobacteria provide insight into the lifestyles of these microorganisms in soils.</title>
        <authorList>
            <person name="Ward N.L."/>
            <person name="Challacombe J.F."/>
            <person name="Janssen P.H."/>
            <person name="Henrissat B."/>
            <person name="Coutinho P.M."/>
            <person name="Wu M."/>
            <person name="Xie G."/>
            <person name="Haft D.H."/>
            <person name="Sait M."/>
            <person name="Badger J."/>
            <person name="Barabote R.D."/>
            <person name="Bradley B."/>
            <person name="Brettin T.S."/>
            <person name="Brinkac L.M."/>
            <person name="Bruce D."/>
            <person name="Creasy T."/>
            <person name="Daugherty S.C."/>
            <person name="Davidsen T.M."/>
            <person name="DeBoy R.T."/>
            <person name="Detter J.C."/>
            <person name="Dodson R.J."/>
            <person name="Durkin A.S."/>
            <person name="Ganapathy A."/>
            <person name="Gwinn-Giglio M."/>
            <person name="Han C.S."/>
            <person name="Khouri H."/>
            <person name="Kiss H."/>
            <person name="Kothari S.P."/>
            <person name="Madupu R."/>
            <person name="Nelson K.E."/>
            <person name="Nelson W.C."/>
            <person name="Paulsen I."/>
            <person name="Penn K."/>
            <person name="Ren Q."/>
            <person name="Rosovitz M.J."/>
            <person name="Selengut J.D."/>
            <person name="Shrivastava S."/>
            <person name="Sullivan S.A."/>
            <person name="Tapia R."/>
            <person name="Thompson L.S."/>
            <person name="Watkins K.L."/>
            <person name="Yang Q."/>
            <person name="Yu C."/>
            <person name="Zafar N."/>
            <person name="Zhou L."/>
            <person name="Kuske C.R."/>
        </authorList>
    </citation>
    <scope>NUCLEOTIDE SEQUENCE [LARGE SCALE GENOMIC DNA]</scope>
    <source>
        <strain>Ellin345</strain>
    </source>
</reference>
<name>RS13_KORVE</name>
<protein>
    <recommendedName>
        <fullName evidence="1">Small ribosomal subunit protein uS13</fullName>
    </recommendedName>
    <alternativeName>
        <fullName evidence="3">30S ribosomal protein S13</fullName>
    </alternativeName>
</protein>
<gene>
    <name evidence="1" type="primary">rpsM</name>
    <name type="ordered locus">Acid345_1251</name>
</gene>
<sequence length="127" mass="14252">MARIAGVDLPRNKYINIALTYIFGIGNSRAKAILAEANVEANRKVSDLNEEEVNRIRTAIENGSSVEGDLRKDVSMHIKRLIEIGSYRGYRHRRSLPVRGQRTHTNARTRKGPRKGTVANKKKATAK</sequence>
<proteinExistence type="inferred from homology"/>
<keyword id="KW-1185">Reference proteome</keyword>
<keyword id="KW-0687">Ribonucleoprotein</keyword>
<keyword id="KW-0689">Ribosomal protein</keyword>
<keyword id="KW-0694">RNA-binding</keyword>
<keyword id="KW-0699">rRNA-binding</keyword>
<keyword id="KW-0820">tRNA-binding</keyword>
<comment type="function">
    <text evidence="1">Located at the top of the head of the 30S subunit, it contacts several helices of the 16S rRNA. In the 70S ribosome it contacts the 23S rRNA (bridge B1a) and protein L5 of the 50S subunit (bridge B1b), connecting the 2 subunits; these bridges are implicated in subunit movement. Contacts the tRNAs in the A and P-sites.</text>
</comment>
<comment type="subunit">
    <text evidence="1">Part of the 30S ribosomal subunit. Forms a loose heterodimer with protein S19. Forms two bridges to the 50S subunit in the 70S ribosome.</text>
</comment>
<comment type="similarity">
    <text evidence="1">Belongs to the universal ribosomal protein uS13 family.</text>
</comment>
<evidence type="ECO:0000255" key="1">
    <source>
        <dbReference type="HAMAP-Rule" id="MF_01315"/>
    </source>
</evidence>
<evidence type="ECO:0000256" key="2">
    <source>
        <dbReference type="SAM" id="MobiDB-lite"/>
    </source>
</evidence>
<evidence type="ECO:0000305" key="3"/>